<accession>P78968</accession>
<accession>O00106</accession>
<accession>Q9UU57</accession>
<organism>
    <name type="scientific">Schizosaccharomyces pombe (strain 972 / ATCC 24843)</name>
    <name type="common">Fission yeast</name>
    <dbReference type="NCBI Taxonomy" id="284812"/>
    <lineage>
        <taxon>Eukaryota</taxon>
        <taxon>Fungi</taxon>
        <taxon>Dikarya</taxon>
        <taxon>Ascomycota</taxon>
        <taxon>Taphrinomycotina</taxon>
        <taxon>Schizosaccharomycetes</taxon>
        <taxon>Schizosaccharomycetales</taxon>
        <taxon>Schizosaccharomycetaceae</taxon>
        <taxon>Schizosaccharomyces</taxon>
    </lineage>
</organism>
<sequence length="515" mass="57131">MGQGSSKHADSKLDSYPSFSRSDTQGSIKSLKSLKTVLGKGKDSNHDRRTSTDTTHSRHRYPETPPSLPPPPSPGILATSPAVLQKHQQEDSGNSSQSPTSPHPSNQPAMLSPSTAASQHHHHHSSSSSYAVSPTSPTSPTSSGPIGSNFDSASEHNGPVYPQDQQGPVIIPNSAISSTDPDDPETVVSLNVDEMIQRLIHVGYSRKSSKSVCLKNAEITSICMAVREIFLSQPTLLELTPPVKIVGDVHGQYSDLIRLFEMCGFPPSSNYLFLGDYVDRGKQSLETILLLFLYKIRYPENFFLLRGNHECANITRVYGFYDECKRRCNIKIWKTFINTFNCLPIASVVAGKIFCVHGGLSPSLSHMDDIREIPRPTDVPDYGLLNDLLWSDPADTENDWEDNERGVSFVFNKNVIRQFLAKHDFDLICRAHMVVEDGYEFFNDRTLCTVFSAPNYCGEFDNWGAVMSVNSELLCSFELIKPLDQAAIRRELKKSKRSGMAIYQSPPAEQVTQSV</sequence>
<proteinExistence type="evidence at protein level"/>
<protein>
    <recommendedName>
        <fullName>Serine/threonine-protein phosphatase PP-Z</fullName>
        <ecNumber>3.1.3.16</ecNumber>
    </recommendedName>
</protein>
<reference key="1">
    <citation type="journal article" date="1997" name="Eur. J. Biochem.">
        <title>Regulation of salt tolerance in fission yeast by a protein-phosphatase-Z-like Ser/Thr protein phosphatase.</title>
        <authorList>
            <person name="Balcells L."/>
            <person name="Gomez N."/>
            <person name="Casamayor A."/>
            <person name="Clotet J."/>
            <person name="Arino J."/>
        </authorList>
    </citation>
    <scope>NUCLEOTIDE SEQUENCE [GENOMIC DNA]</scope>
</reference>
<reference key="2">
    <citation type="journal article" date="2002" name="Nature">
        <title>The genome sequence of Schizosaccharomyces pombe.</title>
        <authorList>
            <person name="Wood V."/>
            <person name="Gwilliam R."/>
            <person name="Rajandream M.A."/>
            <person name="Lyne M.H."/>
            <person name="Lyne R."/>
            <person name="Stewart A."/>
            <person name="Sgouros J.G."/>
            <person name="Peat N."/>
            <person name="Hayles J."/>
            <person name="Baker S.G."/>
            <person name="Basham D."/>
            <person name="Bowman S."/>
            <person name="Brooks K."/>
            <person name="Brown D."/>
            <person name="Brown S."/>
            <person name="Chillingworth T."/>
            <person name="Churcher C.M."/>
            <person name="Collins M."/>
            <person name="Connor R."/>
            <person name="Cronin A."/>
            <person name="Davis P."/>
            <person name="Feltwell T."/>
            <person name="Fraser A."/>
            <person name="Gentles S."/>
            <person name="Goble A."/>
            <person name="Hamlin N."/>
            <person name="Harris D.E."/>
            <person name="Hidalgo J."/>
            <person name="Hodgson G."/>
            <person name="Holroyd S."/>
            <person name="Hornsby T."/>
            <person name="Howarth S."/>
            <person name="Huckle E.J."/>
            <person name="Hunt S."/>
            <person name="Jagels K."/>
            <person name="James K.D."/>
            <person name="Jones L."/>
            <person name="Jones M."/>
            <person name="Leather S."/>
            <person name="McDonald S."/>
            <person name="McLean J."/>
            <person name="Mooney P."/>
            <person name="Moule S."/>
            <person name="Mungall K.L."/>
            <person name="Murphy L.D."/>
            <person name="Niblett D."/>
            <person name="Odell C."/>
            <person name="Oliver K."/>
            <person name="O'Neil S."/>
            <person name="Pearson D."/>
            <person name="Quail M.A."/>
            <person name="Rabbinowitsch E."/>
            <person name="Rutherford K.M."/>
            <person name="Rutter S."/>
            <person name="Saunders D."/>
            <person name="Seeger K."/>
            <person name="Sharp S."/>
            <person name="Skelton J."/>
            <person name="Simmonds M.N."/>
            <person name="Squares R."/>
            <person name="Squares S."/>
            <person name="Stevens K."/>
            <person name="Taylor K."/>
            <person name="Taylor R.G."/>
            <person name="Tivey A."/>
            <person name="Walsh S.V."/>
            <person name="Warren T."/>
            <person name="Whitehead S."/>
            <person name="Woodward J.R."/>
            <person name="Volckaert G."/>
            <person name="Aert R."/>
            <person name="Robben J."/>
            <person name="Grymonprez B."/>
            <person name="Weltjens I."/>
            <person name="Vanstreels E."/>
            <person name="Rieger M."/>
            <person name="Schaefer M."/>
            <person name="Mueller-Auer S."/>
            <person name="Gabel C."/>
            <person name="Fuchs M."/>
            <person name="Duesterhoeft A."/>
            <person name="Fritzc C."/>
            <person name="Holzer E."/>
            <person name="Moestl D."/>
            <person name="Hilbert H."/>
            <person name="Borzym K."/>
            <person name="Langer I."/>
            <person name="Beck A."/>
            <person name="Lehrach H."/>
            <person name="Reinhardt R."/>
            <person name="Pohl T.M."/>
            <person name="Eger P."/>
            <person name="Zimmermann W."/>
            <person name="Wedler H."/>
            <person name="Wambutt R."/>
            <person name="Purnelle B."/>
            <person name="Goffeau A."/>
            <person name="Cadieu E."/>
            <person name="Dreano S."/>
            <person name="Gloux S."/>
            <person name="Lelaure V."/>
            <person name="Mottier S."/>
            <person name="Galibert F."/>
            <person name="Aves S.J."/>
            <person name="Xiang Z."/>
            <person name="Hunt C."/>
            <person name="Moore K."/>
            <person name="Hurst S.M."/>
            <person name="Lucas M."/>
            <person name="Rochet M."/>
            <person name="Gaillardin C."/>
            <person name="Tallada V.A."/>
            <person name="Garzon A."/>
            <person name="Thode G."/>
            <person name="Daga R.R."/>
            <person name="Cruzado L."/>
            <person name="Jimenez J."/>
            <person name="Sanchez M."/>
            <person name="del Rey F."/>
            <person name="Benito J."/>
            <person name="Dominguez A."/>
            <person name="Revuelta J.L."/>
            <person name="Moreno S."/>
            <person name="Armstrong J."/>
            <person name="Forsburg S.L."/>
            <person name="Cerutti L."/>
            <person name="Lowe T."/>
            <person name="McCombie W.R."/>
            <person name="Paulsen I."/>
            <person name="Potashkin J."/>
            <person name="Shpakovski G.V."/>
            <person name="Ussery D."/>
            <person name="Barrell B.G."/>
            <person name="Nurse P."/>
        </authorList>
    </citation>
    <scope>NUCLEOTIDE SEQUENCE [LARGE SCALE GENOMIC DNA]</scope>
    <source>
        <strain>972 / ATCC 24843</strain>
    </source>
</reference>
<reference key="3">
    <citation type="journal article" date="2000" name="Genes Cells">
        <title>Large-scale screening of intracellular protein localization in living fission yeast cells by the use of a GFP-fusion genomic DNA library.</title>
        <authorList>
            <person name="Ding D.-Q."/>
            <person name="Tomita Y."/>
            <person name="Yamamoto A."/>
            <person name="Chikashige Y."/>
            <person name="Haraguchi T."/>
            <person name="Hiraoka Y."/>
        </authorList>
    </citation>
    <scope>NUCLEOTIDE SEQUENCE [LARGE SCALE GENOMIC DNA] OF 1-27</scope>
    <scope>SUBCELLULAR LOCATION</scope>
    <source>
        <strain>ATCC 38364 / 968</strain>
    </source>
</reference>
<reference key="4">
    <citation type="journal article" date="2008" name="J. Proteome Res.">
        <title>Phosphoproteome analysis of fission yeast.</title>
        <authorList>
            <person name="Wilson-Grady J.T."/>
            <person name="Villen J."/>
            <person name="Gygi S.P."/>
        </authorList>
    </citation>
    <scope>PHOSPHORYLATION [LARGE SCALE ANALYSIS] AT SER-18; SER-505 AND SER-514</scope>
    <scope>IDENTIFICATION BY MASS SPECTROMETRY</scope>
</reference>
<feature type="chain" id="PRO_0000058890" description="Serine/threonine-protein phosphatase PP-Z">
    <location>
        <begin position="1"/>
        <end position="515"/>
    </location>
</feature>
<feature type="region of interest" description="Disordered" evidence="2">
    <location>
        <begin position="1"/>
        <end position="186"/>
    </location>
</feature>
<feature type="compositionally biased region" description="Polar residues" evidence="2">
    <location>
        <begin position="17"/>
        <end position="30"/>
    </location>
</feature>
<feature type="compositionally biased region" description="Basic and acidic residues" evidence="2">
    <location>
        <begin position="40"/>
        <end position="51"/>
    </location>
</feature>
<feature type="compositionally biased region" description="Pro residues" evidence="2">
    <location>
        <begin position="63"/>
        <end position="74"/>
    </location>
</feature>
<feature type="compositionally biased region" description="Polar residues" evidence="2">
    <location>
        <begin position="91"/>
        <end position="109"/>
    </location>
</feature>
<feature type="compositionally biased region" description="Low complexity" evidence="2">
    <location>
        <begin position="126"/>
        <end position="143"/>
    </location>
</feature>
<feature type="active site" description="Proton donor" evidence="1">
    <location>
        <position position="309"/>
    </location>
</feature>
<feature type="binding site" evidence="1">
    <location>
        <position position="248"/>
    </location>
    <ligand>
        <name>Mn(2+)</name>
        <dbReference type="ChEBI" id="CHEBI:29035"/>
        <label>1</label>
    </ligand>
</feature>
<feature type="binding site" evidence="1">
    <location>
        <position position="250"/>
    </location>
    <ligand>
        <name>Mn(2+)</name>
        <dbReference type="ChEBI" id="CHEBI:29035"/>
        <label>1</label>
    </ligand>
</feature>
<feature type="binding site" evidence="1">
    <location>
        <position position="276"/>
    </location>
    <ligand>
        <name>Mn(2+)</name>
        <dbReference type="ChEBI" id="CHEBI:29035"/>
        <label>1</label>
    </ligand>
</feature>
<feature type="binding site" evidence="1">
    <location>
        <position position="276"/>
    </location>
    <ligand>
        <name>Mn(2+)</name>
        <dbReference type="ChEBI" id="CHEBI:29035"/>
        <label>2</label>
    </ligand>
</feature>
<feature type="binding site" evidence="1">
    <location>
        <position position="308"/>
    </location>
    <ligand>
        <name>Mn(2+)</name>
        <dbReference type="ChEBI" id="CHEBI:29035"/>
        <label>2</label>
    </ligand>
</feature>
<feature type="binding site" evidence="1">
    <location>
        <position position="357"/>
    </location>
    <ligand>
        <name>Mn(2+)</name>
        <dbReference type="ChEBI" id="CHEBI:29035"/>
        <label>2</label>
    </ligand>
</feature>
<feature type="binding site" evidence="1">
    <location>
        <position position="432"/>
    </location>
    <ligand>
        <name>Mn(2+)</name>
        <dbReference type="ChEBI" id="CHEBI:29035"/>
        <label>2</label>
    </ligand>
</feature>
<feature type="modified residue" description="Phosphoserine" evidence="4">
    <location>
        <position position="18"/>
    </location>
</feature>
<feature type="modified residue" description="Phosphoserine" evidence="4">
    <location>
        <position position="505"/>
    </location>
</feature>
<feature type="modified residue" description="Phosphoserine" evidence="4">
    <location>
        <position position="514"/>
    </location>
</feature>
<name>PPZ_SCHPO</name>
<evidence type="ECO:0000250" key="1"/>
<evidence type="ECO:0000256" key="2">
    <source>
        <dbReference type="SAM" id="MobiDB-lite"/>
    </source>
</evidence>
<evidence type="ECO:0000269" key="3">
    <source>
    </source>
</evidence>
<evidence type="ECO:0000269" key="4">
    <source>
    </source>
</evidence>
<evidence type="ECO:0000305" key="5"/>
<keyword id="KW-0963">Cytoplasm</keyword>
<keyword id="KW-0378">Hydrolase</keyword>
<keyword id="KW-0464">Manganese</keyword>
<keyword id="KW-0479">Metal-binding</keyword>
<keyword id="KW-0597">Phosphoprotein</keyword>
<keyword id="KW-0904">Protein phosphatase</keyword>
<keyword id="KW-1185">Reference proteome</keyword>
<dbReference type="EC" id="3.1.3.16"/>
<dbReference type="EMBL" id="U73689">
    <property type="protein sequence ID" value="AAB96332.1"/>
    <property type="molecule type" value="Genomic_DNA"/>
</dbReference>
<dbReference type="EMBL" id="CU329670">
    <property type="protein sequence ID" value="CAB08766.1"/>
    <property type="molecule type" value="Genomic_DNA"/>
</dbReference>
<dbReference type="EMBL" id="AB027801">
    <property type="protein sequence ID" value="BAA87105.1"/>
    <property type="molecule type" value="Genomic_DNA"/>
</dbReference>
<dbReference type="PIR" id="T38946">
    <property type="entry name" value="T38946"/>
</dbReference>
<dbReference type="RefSeq" id="NP_593373.1">
    <property type="nucleotide sequence ID" value="NM_001018805.2"/>
</dbReference>
<dbReference type="SMR" id="P78968"/>
<dbReference type="BioGRID" id="278725">
    <property type="interactions" value="97"/>
</dbReference>
<dbReference type="FunCoup" id="P78968">
    <property type="interactions" value="302"/>
</dbReference>
<dbReference type="STRING" id="284812.P78968"/>
<dbReference type="iPTMnet" id="P78968"/>
<dbReference type="PaxDb" id="4896-SPAC57A7.08.1"/>
<dbReference type="EnsemblFungi" id="SPAC57A7.08.1">
    <property type="protein sequence ID" value="SPAC57A7.08.1:pep"/>
    <property type="gene ID" value="SPAC57A7.08"/>
</dbReference>
<dbReference type="GeneID" id="2542255"/>
<dbReference type="KEGG" id="spo:2542255"/>
<dbReference type="PomBase" id="SPAC57A7.08">
    <property type="gene designation" value="pzh1"/>
</dbReference>
<dbReference type="VEuPathDB" id="FungiDB:SPAC57A7.08"/>
<dbReference type="eggNOG" id="KOG0374">
    <property type="taxonomic scope" value="Eukaryota"/>
</dbReference>
<dbReference type="HOGENOM" id="CLU_004962_3_0_1"/>
<dbReference type="InParanoid" id="P78968"/>
<dbReference type="OMA" id="KSMMATT"/>
<dbReference type="PhylomeDB" id="P78968"/>
<dbReference type="PRO" id="PR:P78968"/>
<dbReference type="Proteomes" id="UP000002485">
    <property type="component" value="Chromosome I"/>
</dbReference>
<dbReference type="GO" id="GO:0005737">
    <property type="term" value="C:cytoplasm"/>
    <property type="evidence" value="ECO:0007005"/>
    <property type="project" value="PomBase"/>
</dbReference>
<dbReference type="GO" id="GO:0005783">
    <property type="term" value="C:endoplasmic reticulum"/>
    <property type="evidence" value="ECO:0007005"/>
    <property type="project" value="PomBase"/>
</dbReference>
<dbReference type="GO" id="GO:0000324">
    <property type="term" value="C:fungal-type vacuole"/>
    <property type="evidence" value="ECO:0000314"/>
    <property type="project" value="PomBase"/>
</dbReference>
<dbReference type="GO" id="GO:0005634">
    <property type="term" value="C:nucleus"/>
    <property type="evidence" value="ECO:0007005"/>
    <property type="project" value="PomBase"/>
</dbReference>
<dbReference type="GO" id="GO:0046872">
    <property type="term" value="F:metal ion binding"/>
    <property type="evidence" value="ECO:0007669"/>
    <property type="project" value="UniProtKB-KW"/>
</dbReference>
<dbReference type="GO" id="GO:0016791">
    <property type="term" value="F:phosphatase activity"/>
    <property type="evidence" value="ECO:0000314"/>
    <property type="project" value="PomBase"/>
</dbReference>
<dbReference type="GO" id="GO:0004722">
    <property type="term" value="F:protein serine/threonine phosphatase activity"/>
    <property type="evidence" value="ECO:0000314"/>
    <property type="project" value="PomBase"/>
</dbReference>
<dbReference type="GO" id="GO:0007165">
    <property type="term" value="P:signal transduction"/>
    <property type="evidence" value="ECO:0000269"/>
    <property type="project" value="PomBase"/>
</dbReference>
<dbReference type="CDD" id="cd07414">
    <property type="entry name" value="MPP_PP1_PPKL"/>
    <property type="match status" value="1"/>
</dbReference>
<dbReference type="FunFam" id="3.60.21.10:FF:000006">
    <property type="entry name" value="Serine/threonine-protein phosphatase"/>
    <property type="match status" value="1"/>
</dbReference>
<dbReference type="Gene3D" id="3.60.21.10">
    <property type="match status" value="1"/>
</dbReference>
<dbReference type="InterPro" id="IPR004843">
    <property type="entry name" value="Calcineurin-like_PHP_ApaH"/>
</dbReference>
<dbReference type="InterPro" id="IPR029052">
    <property type="entry name" value="Metallo-depent_PP-like"/>
</dbReference>
<dbReference type="InterPro" id="IPR050341">
    <property type="entry name" value="PP1_catalytic_subunit"/>
</dbReference>
<dbReference type="InterPro" id="IPR011159">
    <property type="entry name" value="PPPtase_PPZ/Ppq1"/>
</dbReference>
<dbReference type="InterPro" id="IPR006186">
    <property type="entry name" value="Ser/Thr-sp_prot-phosphatase"/>
</dbReference>
<dbReference type="InterPro" id="IPR031675">
    <property type="entry name" value="STPPase_N"/>
</dbReference>
<dbReference type="PANTHER" id="PTHR11668">
    <property type="entry name" value="SERINE/THREONINE PROTEIN PHOSPHATASE"/>
    <property type="match status" value="1"/>
</dbReference>
<dbReference type="PANTHER" id="PTHR11668:SF484">
    <property type="entry name" value="SERINE_THREONINE-PROTEIN PHOSPHATASE PP-Z1-RELATED"/>
    <property type="match status" value="1"/>
</dbReference>
<dbReference type="Pfam" id="PF00149">
    <property type="entry name" value="Metallophos"/>
    <property type="match status" value="1"/>
</dbReference>
<dbReference type="Pfam" id="PF16891">
    <property type="entry name" value="STPPase_N"/>
    <property type="match status" value="1"/>
</dbReference>
<dbReference type="PIRSF" id="PIRSF000909">
    <property type="entry name" value="PPPtase_PPZ"/>
    <property type="match status" value="1"/>
</dbReference>
<dbReference type="PRINTS" id="PR00114">
    <property type="entry name" value="STPHPHTASE"/>
</dbReference>
<dbReference type="SMART" id="SM00156">
    <property type="entry name" value="PP2Ac"/>
    <property type="match status" value="1"/>
</dbReference>
<dbReference type="SUPFAM" id="SSF56300">
    <property type="entry name" value="Metallo-dependent phosphatases"/>
    <property type="match status" value="1"/>
</dbReference>
<dbReference type="PROSITE" id="PS00125">
    <property type="entry name" value="SER_THR_PHOSPHATASE"/>
    <property type="match status" value="1"/>
</dbReference>
<comment type="catalytic activity">
    <reaction>
        <text>O-phospho-L-seryl-[protein] + H2O = L-seryl-[protein] + phosphate</text>
        <dbReference type="Rhea" id="RHEA:20629"/>
        <dbReference type="Rhea" id="RHEA-COMP:9863"/>
        <dbReference type="Rhea" id="RHEA-COMP:11604"/>
        <dbReference type="ChEBI" id="CHEBI:15377"/>
        <dbReference type="ChEBI" id="CHEBI:29999"/>
        <dbReference type="ChEBI" id="CHEBI:43474"/>
        <dbReference type="ChEBI" id="CHEBI:83421"/>
        <dbReference type="EC" id="3.1.3.16"/>
    </reaction>
</comment>
<comment type="catalytic activity">
    <reaction>
        <text>O-phospho-L-threonyl-[protein] + H2O = L-threonyl-[protein] + phosphate</text>
        <dbReference type="Rhea" id="RHEA:47004"/>
        <dbReference type="Rhea" id="RHEA-COMP:11060"/>
        <dbReference type="Rhea" id="RHEA-COMP:11605"/>
        <dbReference type="ChEBI" id="CHEBI:15377"/>
        <dbReference type="ChEBI" id="CHEBI:30013"/>
        <dbReference type="ChEBI" id="CHEBI:43474"/>
        <dbReference type="ChEBI" id="CHEBI:61977"/>
        <dbReference type="EC" id="3.1.3.16"/>
    </reaction>
</comment>
<comment type="cofactor">
    <cofactor evidence="1">
        <name>Mn(2+)</name>
        <dbReference type="ChEBI" id="CHEBI:29035"/>
    </cofactor>
    <text evidence="1">Binds 2 manganese ions per subunit.</text>
</comment>
<comment type="subcellular location">
    <subcellularLocation>
        <location evidence="3">Cytoplasm</location>
    </subcellularLocation>
    <text>Nucleus; nuclear rim.</text>
</comment>
<comment type="similarity">
    <text evidence="5">Belongs to the PPP phosphatase family. PP-Z subfamily.</text>
</comment>
<gene>
    <name type="primary">pzh1</name>
    <name type="synonym">phz1</name>
    <name type="ORF">SPAC57A7.08</name>
</gene>